<reference key="1">
    <citation type="journal article" date="2017" name="Toxins">
        <title>Combined venom gland transcriptomic and venom peptidomic analysis of the predatory ant Odontomachus monticola.</title>
        <authorList>
            <person name="Kazuma K."/>
            <person name="Masuko K."/>
            <person name="Konno K."/>
            <person name="Inagaki H."/>
        </authorList>
    </citation>
    <scope>NUCLEOTIDE SEQUENCE [MRNA]</scope>
    <scope>MASS SPECTROMETRY</scope>
    <scope>SUBCELLULAR LOCATION</scope>
    <scope>PROBABLE AMIDATION AT ALA-79</scope>
    <source>
        <tissue>Venom</tissue>
        <tissue>Venom gland</tissue>
    </source>
</reference>
<reference key="2">
    <citation type="journal article" date="2019" name="Toxins">
        <title>Mass spectrometry analysis and biological characterization of the predatory ant Odontomachus monticola venom and venom sac components.</title>
        <authorList>
            <person name="Tani N."/>
            <person name="Kazuma K."/>
            <person name="Ohtsuka Y."/>
            <person name="Shigeri Y."/>
            <person name="Masuko K."/>
            <person name="Konno K."/>
            <person name="Inagaki H."/>
        </authorList>
    </citation>
    <scope>FUNCTION</scope>
    <scope>IDENTIFICATION BY MASS SPECTROMETRY</scope>
    <scope>SYNTHESIS OF PEPTIDE WITH UNKNOWN TERMINAL RESIDUES</scope>
    <scope>SUBCELLULAR LOCATION</scope>
    <source>
        <tissue>Venom</tissue>
    </source>
</reference>
<reference key="3">
    <citation type="journal article" date="2018" name="Sci. Adv.">
        <title>A comprehensive portrait of the venom of the giant red bull ant, Myrmecia gulosa, reveals a hyperdiverse hymenopteran toxin gene family.</title>
        <authorList>
            <person name="Robinson S.D."/>
            <person name="Mueller A."/>
            <person name="Clayton D."/>
            <person name="Starobova H."/>
            <person name="Hamilton B.R."/>
            <person name="Payne R.J."/>
            <person name="Vetter I."/>
            <person name="King G.F."/>
            <person name="Undheim E.A.B."/>
        </authorList>
    </citation>
    <scope>NOMENCLATURE</scope>
</reference>
<name>TX16A_ODOMO</name>
<evidence type="ECO:0000255" key="1"/>
<evidence type="ECO:0000269" key="2">
    <source>
    </source>
</evidence>
<evidence type="ECO:0000269" key="3">
    <source>
    </source>
</evidence>
<evidence type="ECO:0000303" key="4">
    <source>
    </source>
</evidence>
<evidence type="ECO:0000303" key="5">
    <source>
    </source>
</evidence>
<evidence type="ECO:0000305" key="6"/>
<evidence type="ECO:0000305" key="7">
    <source>
    </source>
</evidence>
<evidence type="ECO:0000305" key="8">
    <source>
    </source>
</evidence>
<evidence type="ECO:0000312" key="9">
    <source>
        <dbReference type="EMBL" id="BBF97835.1"/>
    </source>
</evidence>
<proteinExistence type="evidence at protein level"/>
<protein>
    <recommendedName>
        <fullName evidence="6">U-poneritoxin(01)-Om6a</fullName>
        <shortName evidence="5">PONTX(01)-Om6</shortName>
        <shortName evidence="6">U-PONTX(01)-Om6a</shortName>
    </recommendedName>
    <alternativeName>
        <fullName evidence="9">Pilosulin-like peptide 6</fullName>
        <shortName evidence="4">PLP6</shortName>
    </alternativeName>
    <alternativeName>
        <fullName evidence="6">Poneratoxin</fullName>
    </alternativeName>
</protein>
<sequence length="81" mass="8342">MRRSYVLLAFAIVLIISIISAQVEADASSDAFADAVADAVADPIKGKKIMKNMGKAMKIAGKVAKAMAPIVVPLIVSAAGK</sequence>
<keyword id="KW-0027">Amidation</keyword>
<keyword id="KW-0044">Antibiotic</keyword>
<keyword id="KW-0929">Antimicrobial</keyword>
<keyword id="KW-0964">Secreted</keyword>
<keyword id="KW-0732">Signal</keyword>
<keyword id="KW-0800">Toxin</keyword>
<dbReference type="EMBL" id="FX985499">
    <property type="protein sequence ID" value="BBF97835.1"/>
    <property type="molecule type" value="mRNA"/>
</dbReference>
<dbReference type="SMR" id="A0A348G5W2"/>
<dbReference type="GO" id="GO:0005576">
    <property type="term" value="C:extracellular region"/>
    <property type="evidence" value="ECO:0007669"/>
    <property type="project" value="UniProtKB-SubCell"/>
</dbReference>
<dbReference type="GO" id="GO:0090729">
    <property type="term" value="F:toxin activity"/>
    <property type="evidence" value="ECO:0007669"/>
    <property type="project" value="UniProtKB-KW"/>
</dbReference>
<dbReference type="GO" id="GO:0042742">
    <property type="term" value="P:defense response to bacterium"/>
    <property type="evidence" value="ECO:0007669"/>
    <property type="project" value="UniProtKB-KW"/>
</dbReference>
<dbReference type="InterPro" id="IPR049518">
    <property type="entry name" value="Pilosulin"/>
</dbReference>
<dbReference type="Pfam" id="PF17499">
    <property type="entry name" value="Pilosulin"/>
    <property type="match status" value="1"/>
</dbReference>
<organism>
    <name type="scientific">Odontomachus monticola</name>
    <name type="common">Trap-jaw ant</name>
    <dbReference type="NCBI Taxonomy" id="613454"/>
    <lineage>
        <taxon>Eukaryota</taxon>
        <taxon>Metazoa</taxon>
        <taxon>Ecdysozoa</taxon>
        <taxon>Arthropoda</taxon>
        <taxon>Hexapoda</taxon>
        <taxon>Insecta</taxon>
        <taxon>Pterygota</taxon>
        <taxon>Neoptera</taxon>
        <taxon>Endopterygota</taxon>
        <taxon>Hymenoptera</taxon>
        <taxon>Apocrita</taxon>
        <taxon>Aculeata</taxon>
        <taxon>Formicoidea</taxon>
        <taxon>Formicidae</taxon>
        <taxon>Ponerinae</taxon>
        <taxon>Ponerini</taxon>
        <taxon>Odontomachus</taxon>
    </lineage>
</organism>
<feature type="signal peptide" evidence="1">
    <location>
        <begin position="1"/>
        <end position="21"/>
    </location>
</feature>
<feature type="propeptide" id="PRO_0000447086" evidence="7">
    <location>
        <begin position="22"/>
        <end position="43"/>
    </location>
</feature>
<feature type="peptide" id="PRO_5016781678" description="U-poneritoxin(01)-Om6a" evidence="3">
    <location>
        <begin position="44"/>
        <end position="79"/>
    </location>
</feature>
<feature type="modified residue" description="Alanine amide" evidence="7">
    <location>
        <position position="79"/>
    </location>
</feature>
<accession>A0A348G5W2</accession>
<comment type="function">
    <text evidence="3">Cationic amphipathic alpha-helical peptide with antimicrobial activities against E.coli (MIC=3.1), and S.aureus (MIC=3.1 uM). Also shows histamine-releasing activity (33.6% at 10 uM). Does not have activity against S.cerevisiae. Does not show hemolytic activity, even at 50 uM.</text>
</comment>
<comment type="subcellular location">
    <subcellularLocation>
        <location evidence="2">Secreted</location>
    </subcellularLocation>
</comment>
<comment type="tissue specificity">
    <text evidence="7">Expressed by the venom gland.</text>
</comment>
<comment type="PTM">
    <text evidence="8">Truncated sequences of this peptide have also been found in the venom. It is possible they have been cleaved in the venom.</text>
</comment>
<comment type="mass spectrometry" mass="3704.235" method="Electrospray" evidence="2">
    <text>Monoisotopic mass.</text>
</comment>
<comment type="similarity">
    <text evidence="6">Belongs to the formicidae venom precursor-01 superfamily.</text>
</comment>